<comment type="catalytic activity">
    <reaction>
        <text>tRNA(Gly) + glycine + ATP = glycyl-tRNA(Gly) + AMP + diphosphate</text>
        <dbReference type="Rhea" id="RHEA:16013"/>
        <dbReference type="Rhea" id="RHEA-COMP:9664"/>
        <dbReference type="Rhea" id="RHEA-COMP:9683"/>
        <dbReference type="ChEBI" id="CHEBI:30616"/>
        <dbReference type="ChEBI" id="CHEBI:33019"/>
        <dbReference type="ChEBI" id="CHEBI:57305"/>
        <dbReference type="ChEBI" id="CHEBI:78442"/>
        <dbReference type="ChEBI" id="CHEBI:78522"/>
        <dbReference type="ChEBI" id="CHEBI:456215"/>
        <dbReference type="EC" id="6.1.1.14"/>
    </reaction>
</comment>
<comment type="subunit">
    <text evidence="1">Tetramer of two alpha and two beta subunits.</text>
</comment>
<comment type="subcellular location">
    <subcellularLocation>
        <location evidence="1">Cytoplasm</location>
    </subcellularLocation>
</comment>
<comment type="similarity">
    <text evidence="2">Belongs to the class-II aminoacyl-tRNA synthetase family.</text>
</comment>
<comment type="sequence caution" evidence="2">
    <conflict type="erroneous initiation">
        <sequence resource="EMBL-CDS" id="CAA15273"/>
    </conflict>
</comment>
<name>SYGB_RICPR</name>
<organism>
    <name type="scientific">Rickettsia prowazekii (strain Madrid E)</name>
    <dbReference type="NCBI Taxonomy" id="272947"/>
    <lineage>
        <taxon>Bacteria</taxon>
        <taxon>Pseudomonadati</taxon>
        <taxon>Pseudomonadota</taxon>
        <taxon>Alphaproteobacteria</taxon>
        <taxon>Rickettsiales</taxon>
        <taxon>Rickettsiaceae</taxon>
        <taxon>Rickettsieae</taxon>
        <taxon>Rickettsia</taxon>
        <taxon>typhus group</taxon>
    </lineage>
</organism>
<gene>
    <name type="primary">glyS</name>
    <name type="ordered locus">RP849</name>
</gene>
<feature type="chain" id="PRO_0000072924" description="Glycine--tRNA ligase beta subunit">
    <location>
        <begin position="1"/>
        <end position="665"/>
    </location>
</feature>
<keyword id="KW-0030">Aminoacyl-tRNA synthetase</keyword>
<keyword id="KW-0067">ATP-binding</keyword>
<keyword id="KW-0963">Cytoplasm</keyword>
<keyword id="KW-0436">Ligase</keyword>
<keyword id="KW-0547">Nucleotide-binding</keyword>
<keyword id="KW-0648">Protein biosynthesis</keyword>
<keyword id="KW-1185">Reference proteome</keyword>
<proteinExistence type="inferred from homology"/>
<dbReference type="EC" id="6.1.1.14"/>
<dbReference type="EMBL" id="AJ235273">
    <property type="protein sequence ID" value="CAA15273.1"/>
    <property type="status" value="ALT_INIT"/>
    <property type="molecule type" value="Genomic_DNA"/>
</dbReference>
<dbReference type="PIR" id="A71647">
    <property type="entry name" value="A71647"/>
</dbReference>
<dbReference type="RefSeq" id="NP_221197.2">
    <property type="nucleotide sequence ID" value="NC_000963.1"/>
</dbReference>
<dbReference type="SMR" id="Q9ZCB1"/>
<dbReference type="STRING" id="272947.gene:17555918"/>
<dbReference type="EnsemblBacteria" id="CAA15273">
    <property type="protein sequence ID" value="CAA15273"/>
    <property type="gene ID" value="CAA15273"/>
</dbReference>
<dbReference type="KEGG" id="rpr:RP849"/>
<dbReference type="PATRIC" id="fig|272947.5.peg.887"/>
<dbReference type="eggNOG" id="COG0751">
    <property type="taxonomic scope" value="Bacteria"/>
</dbReference>
<dbReference type="HOGENOM" id="CLU_007220_2_1_5"/>
<dbReference type="OrthoDB" id="9775440at2"/>
<dbReference type="Proteomes" id="UP000002480">
    <property type="component" value="Chromosome"/>
</dbReference>
<dbReference type="GO" id="GO:0005829">
    <property type="term" value="C:cytosol"/>
    <property type="evidence" value="ECO:0007669"/>
    <property type="project" value="TreeGrafter"/>
</dbReference>
<dbReference type="GO" id="GO:0004814">
    <property type="term" value="F:arginine-tRNA ligase activity"/>
    <property type="evidence" value="ECO:0007669"/>
    <property type="project" value="InterPro"/>
</dbReference>
<dbReference type="GO" id="GO:0005524">
    <property type="term" value="F:ATP binding"/>
    <property type="evidence" value="ECO:0007669"/>
    <property type="project" value="UniProtKB-UniRule"/>
</dbReference>
<dbReference type="GO" id="GO:0004820">
    <property type="term" value="F:glycine-tRNA ligase activity"/>
    <property type="evidence" value="ECO:0007669"/>
    <property type="project" value="UniProtKB-UniRule"/>
</dbReference>
<dbReference type="GO" id="GO:0006420">
    <property type="term" value="P:arginyl-tRNA aminoacylation"/>
    <property type="evidence" value="ECO:0007669"/>
    <property type="project" value="InterPro"/>
</dbReference>
<dbReference type="GO" id="GO:0006426">
    <property type="term" value="P:glycyl-tRNA aminoacylation"/>
    <property type="evidence" value="ECO:0007669"/>
    <property type="project" value="UniProtKB-UniRule"/>
</dbReference>
<dbReference type="HAMAP" id="MF_00255">
    <property type="entry name" value="Gly_tRNA_synth_beta"/>
    <property type="match status" value="1"/>
</dbReference>
<dbReference type="InterPro" id="IPR008909">
    <property type="entry name" value="DALR_anticod-bd"/>
</dbReference>
<dbReference type="InterPro" id="IPR015944">
    <property type="entry name" value="Gly-tRNA-synth_bsu"/>
</dbReference>
<dbReference type="InterPro" id="IPR006194">
    <property type="entry name" value="Gly-tRNA-synth_heterodimer"/>
</dbReference>
<dbReference type="NCBIfam" id="TIGR00211">
    <property type="entry name" value="glyS"/>
    <property type="match status" value="1"/>
</dbReference>
<dbReference type="PANTHER" id="PTHR30075:SF2">
    <property type="entry name" value="GLYCINE--TRNA LIGASE, CHLOROPLASTIC_MITOCHONDRIAL 2"/>
    <property type="match status" value="1"/>
</dbReference>
<dbReference type="PANTHER" id="PTHR30075">
    <property type="entry name" value="GLYCYL-TRNA SYNTHETASE"/>
    <property type="match status" value="1"/>
</dbReference>
<dbReference type="Pfam" id="PF05746">
    <property type="entry name" value="DALR_1"/>
    <property type="match status" value="1"/>
</dbReference>
<dbReference type="Pfam" id="PF02092">
    <property type="entry name" value="tRNA_synt_2f"/>
    <property type="match status" value="1"/>
</dbReference>
<dbReference type="PRINTS" id="PR01045">
    <property type="entry name" value="TRNASYNTHGB"/>
</dbReference>
<dbReference type="SMART" id="SM00836">
    <property type="entry name" value="DALR_1"/>
    <property type="match status" value="1"/>
</dbReference>
<dbReference type="SUPFAM" id="SSF109604">
    <property type="entry name" value="HD-domain/PDEase-like"/>
    <property type="match status" value="1"/>
</dbReference>
<dbReference type="PROSITE" id="PS50861">
    <property type="entry name" value="AA_TRNA_LIGASE_II_GLYAB"/>
    <property type="match status" value="1"/>
</dbReference>
<evidence type="ECO:0000250" key="1"/>
<evidence type="ECO:0000305" key="2"/>
<sequence length="665" mass="76216">MVSELLLELFSEEIPAFMQKNAEEGYLKIFTKIFEENEIFAKVQVFAGPRRITLHATHVPKVILPKEEEIKGPSIEAPEIAINGFCKAHNVSKLDLSTKLRNNKLYYFFVKKTKERETKEILPKIIIDAINKYSWTKSMFWGCYKIKWIRPLRNILCIFDGEILPLRFGHLSTNNITYGHRLTNNKKLEIIDFENYRNKLLENNVILERLKREEIIKVGLLELANAQNLNIKQDVCLIEEVTGLSEFPIVLLGKIPQKFLELPEEVIVSVMRTHQKYFCLFDKNGSFAPYFLFVINGRFVNTELIIQGNEKVLSARLADALYFYKNDIAKTLESRLDKLKSVIFHTKLGSLKEKVDRITDICRYIAPDNIDLIMAAKLCKSDLVSDMVGEFPDLQGIMGYYYAKHEELNEEVAKAIRDHYKPQGLNDNVPSGNATLLALADKLDSLVGLIIVGETPNGSGDPYALRRQALGIIRIIIENKLEINFINLISFSVSLYKVSSNSHLDSVISFFEERAKFYFKNDYDITLINAVLDLNLVDTKFKLDTLKEFLVQDVGKQLLNAYKRVSNIMGNQKITGLVDASLFSTQYEKELFEVIQKISQQIIVIIANKDYQKALNLLSSLLKPITSFFDNVLVNDSDPKIAQNRLSLLQNTCEVFDKVAKFCRL</sequence>
<accession>Q9ZCB1</accession>
<protein>
    <recommendedName>
        <fullName>Glycine--tRNA ligase beta subunit</fullName>
        <ecNumber>6.1.1.14</ecNumber>
    </recommendedName>
    <alternativeName>
        <fullName>Glycyl-tRNA synthetase beta subunit</fullName>
        <shortName>GlyRS</shortName>
    </alternativeName>
</protein>
<reference key="1">
    <citation type="journal article" date="1998" name="Nature">
        <title>The genome sequence of Rickettsia prowazekii and the origin of mitochondria.</title>
        <authorList>
            <person name="Andersson S.G.E."/>
            <person name="Zomorodipour A."/>
            <person name="Andersson J.O."/>
            <person name="Sicheritz-Ponten T."/>
            <person name="Alsmark U.C.M."/>
            <person name="Podowski R.M."/>
            <person name="Naeslund A.K."/>
            <person name="Eriksson A.-S."/>
            <person name="Winkler H.H."/>
            <person name="Kurland C.G."/>
        </authorList>
    </citation>
    <scope>NUCLEOTIDE SEQUENCE [LARGE SCALE GENOMIC DNA]</scope>
    <source>
        <strain>Madrid E</strain>
    </source>
</reference>